<gene>
    <name type="primary">SWF1</name>
    <name type="ordered locus">DEHA2E17138g</name>
</gene>
<reference key="1">
    <citation type="journal article" date="2004" name="Nature">
        <title>Genome evolution in yeasts.</title>
        <authorList>
            <person name="Dujon B."/>
            <person name="Sherman D."/>
            <person name="Fischer G."/>
            <person name="Durrens P."/>
            <person name="Casaregola S."/>
            <person name="Lafontaine I."/>
            <person name="de Montigny J."/>
            <person name="Marck C."/>
            <person name="Neuveglise C."/>
            <person name="Talla E."/>
            <person name="Goffard N."/>
            <person name="Frangeul L."/>
            <person name="Aigle M."/>
            <person name="Anthouard V."/>
            <person name="Babour A."/>
            <person name="Barbe V."/>
            <person name="Barnay S."/>
            <person name="Blanchin S."/>
            <person name="Beckerich J.-M."/>
            <person name="Beyne E."/>
            <person name="Bleykasten C."/>
            <person name="Boisrame A."/>
            <person name="Boyer J."/>
            <person name="Cattolico L."/>
            <person name="Confanioleri F."/>
            <person name="de Daruvar A."/>
            <person name="Despons L."/>
            <person name="Fabre E."/>
            <person name="Fairhead C."/>
            <person name="Ferry-Dumazet H."/>
            <person name="Groppi A."/>
            <person name="Hantraye F."/>
            <person name="Hennequin C."/>
            <person name="Jauniaux N."/>
            <person name="Joyet P."/>
            <person name="Kachouri R."/>
            <person name="Kerrest A."/>
            <person name="Koszul R."/>
            <person name="Lemaire M."/>
            <person name="Lesur I."/>
            <person name="Ma L."/>
            <person name="Muller H."/>
            <person name="Nicaud J.-M."/>
            <person name="Nikolski M."/>
            <person name="Oztas S."/>
            <person name="Ozier-Kalogeropoulos O."/>
            <person name="Pellenz S."/>
            <person name="Potier S."/>
            <person name="Richard G.-F."/>
            <person name="Straub M.-L."/>
            <person name="Suleau A."/>
            <person name="Swennen D."/>
            <person name="Tekaia F."/>
            <person name="Wesolowski-Louvel M."/>
            <person name="Westhof E."/>
            <person name="Wirth B."/>
            <person name="Zeniou-Meyer M."/>
            <person name="Zivanovic Y."/>
            <person name="Bolotin-Fukuhara M."/>
            <person name="Thierry A."/>
            <person name="Bouchier C."/>
            <person name="Caudron B."/>
            <person name="Scarpelli C."/>
            <person name="Gaillardin C."/>
            <person name="Weissenbach J."/>
            <person name="Wincker P."/>
            <person name="Souciet J.-L."/>
        </authorList>
    </citation>
    <scope>NUCLEOTIDE SEQUENCE [LARGE SCALE GENOMIC DNA]</scope>
    <source>
        <strain>ATCC 36239 / CBS 767 / BCRC 21394 / JCM 1990 / NBRC 0083 / IGC 2968</strain>
    </source>
</reference>
<name>SWF1_DEBHA</name>
<feature type="chain" id="PRO_0000212988" description="Palmitoyltransferase SWF1">
    <location>
        <begin position="1"/>
        <end position="377"/>
    </location>
</feature>
<feature type="topological domain" description="Lumenal" evidence="2">
    <location>
        <begin position="1"/>
        <end position="4"/>
    </location>
</feature>
<feature type="transmembrane region" description="Helical" evidence="2">
    <location>
        <begin position="5"/>
        <end position="25"/>
    </location>
</feature>
<feature type="topological domain" description="Cytoplasmic" evidence="2">
    <location>
        <begin position="26"/>
        <end position="64"/>
    </location>
</feature>
<feature type="transmembrane region" description="Helical" evidence="2">
    <location>
        <begin position="65"/>
        <end position="85"/>
    </location>
</feature>
<feature type="topological domain" description="Lumenal" evidence="2">
    <location>
        <begin position="86"/>
        <end position="103"/>
    </location>
</feature>
<feature type="transmembrane region" description="Helical" evidence="2">
    <location>
        <begin position="104"/>
        <end position="124"/>
    </location>
</feature>
<feature type="topological domain" description="Cytoplasmic" evidence="2">
    <location>
        <begin position="125"/>
        <end position="198"/>
    </location>
</feature>
<feature type="transmembrane region" description="Helical" evidence="2">
    <location>
        <begin position="199"/>
        <end position="219"/>
    </location>
</feature>
<feature type="topological domain" description="Lumenal" evidence="2">
    <location>
        <begin position="220"/>
        <end position="249"/>
    </location>
</feature>
<feature type="transmembrane region" description="Helical" evidence="2">
    <location>
        <begin position="250"/>
        <end position="270"/>
    </location>
</feature>
<feature type="topological domain" description="Cytoplasmic" evidence="2">
    <location>
        <begin position="271"/>
        <end position="377"/>
    </location>
</feature>
<feature type="domain" description="DHHC" evidence="3">
    <location>
        <begin position="155"/>
        <end position="205"/>
    </location>
</feature>
<evidence type="ECO:0000250" key="1"/>
<evidence type="ECO:0000255" key="2"/>
<evidence type="ECO:0000255" key="3">
    <source>
        <dbReference type="PROSITE-ProRule" id="PRU00067"/>
    </source>
</evidence>
<evidence type="ECO:0000305" key="4"/>
<comment type="function">
    <text evidence="1">Palmitoyltransferase that targets several endosomal SNAREs. Palmitoylates the SNAREs at cysteine residues close to the cytoplasmic end of their transmembrane domain. May have a role in the cellular quality control of transmembrane domain-containing proteins (By similarity).</text>
</comment>
<comment type="catalytic activity">
    <reaction>
        <text>L-cysteinyl-[protein] + hexadecanoyl-CoA = S-hexadecanoyl-L-cysteinyl-[protein] + CoA</text>
        <dbReference type="Rhea" id="RHEA:36683"/>
        <dbReference type="Rhea" id="RHEA-COMP:10131"/>
        <dbReference type="Rhea" id="RHEA-COMP:11032"/>
        <dbReference type="ChEBI" id="CHEBI:29950"/>
        <dbReference type="ChEBI" id="CHEBI:57287"/>
        <dbReference type="ChEBI" id="CHEBI:57379"/>
        <dbReference type="ChEBI" id="CHEBI:74151"/>
        <dbReference type="EC" id="2.3.1.225"/>
    </reaction>
</comment>
<comment type="subcellular location">
    <subcellularLocation>
        <location evidence="1">Endoplasmic reticulum membrane</location>
        <topology evidence="1">Multi-pass membrane protein</topology>
    </subcellularLocation>
</comment>
<comment type="domain">
    <text evidence="1">The DHHC domain is required for palmitoyltransferase activity.</text>
</comment>
<comment type="similarity">
    <text evidence="4">Belongs to the DHHC palmitoyltransferase family. SWF1 subfamily.</text>
</comment>
<organism>
    <name type="scientific">Debaryomyces hansenii (strain ATCC 36239 / CBS 767 / BCRC 21394 / JCM 1990 / NBRC 0083 / IGC 2968)</name>
    <name type="common">Yeast</name>
    <name type="synonym">Torulaspora hansenii</name>
    <dbReference type="NCBI Taxonomy" id="284592"/>
    <lineage>
        <taxon>Eukaryota</taxon>
        <taxon>Fungi</taxon>
        <taxon>Dikarya</taxon>
        <taxon>Ascomycota</taxon>
        <taxon>Saccharomycotina</taxon>
        <taxon>Pichiomycetes</taxon>
        <taxon>Debaryomycetaceae</taxon>
        <taxon>Debaryomyces</taxon>
    </lineage>
</organism>
<dbReference type="EC" id="2.3.1.225"/>
<dbReference type="EMBL" id="CR382137">
    <property type="protein sequence ID" value="CAG88305.1"/>
    <property type="molecule type" value="Genomic_DNA"/>
</dbReference>
<dbReference type="RefSeq" id="XP_460047.1">
    <property type="nucleotide sequence ID" value="XM_460047.1"/>
</dbReference>
<dbReference type="SMR" id="Q6BP23"/>
<dbReference type="FunCoup" id="Q6BP23">
    <property type="interactions" value="34"/>
</dbReference>
<dbReference type="STRING" id="284592.Q6BP23"/>
<dbReference type="GeneID" id="2902475"/>
<dbReference type="KEGG" id="dha:DEHA2E17138g"/>
<dbReference type="VEuPathDB" id="FungiDB:DEHA2E17138g"/>
<dbReference type="eggNOG" id="KOG1312">
    <property type="taxonomic scope" value="Eukaryota"/>
</dbReference>
<dbReference type="HOGENOM" id="CLU_042181_2_0_1"/>
<dbReference type="InParanoid" id="Q6BP23"/>
<dbReference type="OMA" id="HIYLIWA"/>
<dbReference type="OrthoDB" id="9909019at2759"/>
<dbReference type="Proteomes" id="UP000000599">
    <property type="component" value="Chromosome E"/>
</dbReference>
<dbReference type="GO" id="GO:0005789">
    <property type="term" value="C:endoplasmic reticulum membrane"/>
    <property type="evidence" value="ECO:0007669"/>
    <property type="project" value="UniProtKB-SubCell"/>
</dbReference>
<dbReference type="GO" id="GO:0005794">
    <property type="term" value="C:Golgi apparatus"/>
    <property type="evidence" value="ECO:0007669"/>
    <property type="project" value="TreeGrafter"/>
</dbReference>
<dbReference type="GO" id="GO:0019706">
    <property type="term" value="F:protein-cysteine S-palmitoyltransferase activity"/>
    <property type="evidence" value="ECO:0007669"/>
    <property type="project" value="UniProtKB-EC"/>
</dbReference>
<dbReference type="GO" id="GO:0006612">
    <property type="term" value="P:protein targeting to membrane"/>
    <property type="evidence" value="ECO:0007669"/>
    <property type="project" value="TreeGrafter"/>
</dbReference>
<dbReference type="InterPro" id="IPR001594">
    <property type="entry name" value="Palmitoyltrfase_DHHC"/>
</dbReference>
<dbReference type="InterPro" id="IPR039859">
    <property type="entry name" value="PFA4/ZDH16/20/ERF2-like"/>
</dbReference>
<dbReference type="PANTHER" id="PTHR22883:SF489">
    <property type="entry name" value="PALMITOYLTRANSFERASE SWF1"/>
    <property type="match status" value="1"/>
</dbReference>
<dbReference type="PANTHER" id="PTHR22883">
    <property type="entry name" value="ZINC FINGER DHHC DOMAIN CONTAINING PROTEIN"/>
    <property type="match status" value="1"/>
</dbReference>
<dbReference type="Pfam" id="PF01529">
    <property type="entry name" value="DHHC"/>
    <property type="match status" value="1"/>
</dbReference>
<dbReference type="PROSITE" id="PS50216">
    <property type="entry name" value="DHHC"/>
    <property type="match status" value="1"/>
</dbReference>
<proteinExistence type="inferred from homology"/>
<sequence>MSLPFTVIICIVLLSAILISIVIFGNSPNFRNTPIYKLRLKILRWNHDIIAWINYVDSHVFGNKLVFYSGWLVPLFYIIVVSFCLHQFFTKVYKLLPLFVRKSGFHSTYIAFTILCIFIDTFMATFSNPGKITTGNVDKVDNFFQNNELIFFADNYCSTCEIIKPARSKHCSICNNCIMLFDHHCIWVNNCVGYYNYKWFMGFLIANINLLGYGGYLCYQAMSSTKTEFPTLSYWKTIISTNDSNKATGVLLILCVIFIMIAVLFTGLHLRYLYLGVTTNECDKWSEVEYLISLGSLYQVIDSNLNEKYVEKCVIMNHDNDSYETVFISLKNENVLFSSNDGINLRKIESMEDDLINIYDHGFVDNLKERMFNRVLN</sequence>
<keyword id="KW-0012">Acyltransferase</keyword>
<keyword id="KW-0256">Endoplasmic reticulum</keyword>
<keyword id="KW-0449">Lipoprotein</keyword>
<keyword id="KW-0472">Membrane</keyword>
<keyword id="KW-0564">Palmitate</keyword>
<keyword id="KW-1185">Reference proteome</keyword>
<keyword id="KW-0808">Transferase</keyword>
<keyword id="KW-0812">Transmembrane</keyword>
<keyword id="KW-1133">Transmembrane helix</keyword>
<protein>
    <recommendedName>
        <fullName>Palmitoyltransferase SWF1</fullName>
        <ecNumber>2.3.1.225</ecNumber>
    </recommendedName>
</protein>
<accession>Q6BP23</accession>